<accession>B0VTA6</accession>
<name>DAPD_ACIBS</name>
<organism>
    <name type="scientific">Acinetobacter baumannii (strain SDF)</name>
    <dbReference type="NCBI Taxonomy" id="509170"/>
    <lineage>
        <taxon>Bacteria</taxon>
        <taxon>Pseudomonadati</taxon>
        <taxon>Pseudomonadota</taxon>
        <taxon>Gammaproteobacteria</taxon>
        <taxon>Moraxellales</taxon>
        <taxon>Moraxellaceae</taxon>
        <taxon>Acinetobacter</taxon>
        <taxon>Acinetobacter calcoaceticus/baumannii complex</taxon>
    </lineage>
</organism>
<proteinExistence type="inferred from homology"/>
<reference key="1">
    <citation type="journal article" date="2008" name="PLoS ONE">
        <title>Comparative analysis of Acinetobacters: three genomes for three lifestyles.</title>
        <authorList>
            <person name="Vallenet D."/>
            <person name="Nordmann P."/>
            <person name="Barbe V."/>
            <person name="Poirel L."/>
            <person name="Mangenot S."/>
            <person name="Bataille E."/>
            <person name="Dossat C."/>
            <person name="Gas S."/>
            <person name="Kreimeyer A."/>
            <person name="Lenoble P."/>
            <person name="Oztas S."/>
            <person name="Poulain J."/>
            <person name="Segurens B."/>
            <person name="Robert C."/>
            <person name="Abergel C."/>
            <person name="Claverie J.-M."/>
            <person name="Raoult D."/>
            <person name="Medigue C."/>
            <person name="Weissenbach J."/>
            <person name="Cruveiller S."/>
        </authorList>
    </citation>
    <scope>NUCLEOTIDE SEQUENCE [LARGE SCALE GENOMIC DNA]</scope>
    <source>
        <strain>SDF</strain>
    </source>
</reference>
<evidence type="ECO:0000255" key="1">
    <source>
        <dbReference type="HAMAP-Rule" id="MF_00811"/>
    </source>
</evidence>
<gene>
    <name evidence="1" type="primary">dapD</name>
    <name type="ordered locus">ABSDF0933</name>
</gene>
<protein>
    <recommendedName>
        <fullName evidence="1">2,3,4,5-tetrahydropyridine-2,6-dicarboxylate N-succinyltransferase</fullName>
        <ecNumber evidence="1">2.3.1.117</ecNumber>
    </recommendedName>
    <alternativeName>
        <fullName evidence="1">Tetrahydrodipicolinate N-succinyltransferase</fullName>
        <shortName evidence="1">THP succinyltransferase</shortName>
        <shortName evidence="1">Tetrahydropicolinate succinylase</shortName>
    </alternativeName>
</protein>
<keyword id="KW-0012">Acyltransferase</keyword>
<keyword id="KW-0028">Amino-acid biosynthesis</keyword>
<keyword id="KW-0963">Cytoplasm</keyword>
<keyword id="KW-0220">Diaminopimelate biosynthesis</keyword>
<keyword id="KW-0457">Lysine biosynthesis</keyword>
<keyword id="KW-0677">Repeat</keyword>
<keyword id="KW-0808">Transferase</keyword>
<comment type="catalytic activity">
    <reaction evidence="1">
        <text>(S)-2,3,4,5-tetrahydrodipicolinate + succinyl-CoA + H2O = (S)-2-succinylamino-6-oxoheptanedioate + CoA</text>
        <dbReference type="Rhea" id="RHEA:17325"/>
        <dbReference type="ChEBI" id="CHEBI:15377"/>
        <dbReference type="ChEBI" id="CHEBI:15685"/>
        <dbReference type="ChEBI" id="CHEBI:16845"/>
        <dbReference type="ChEBI" id="CHEBI:57287"/>
        <dbReference type="ChEBI" id="CHEBI:57292"/>
        <dbReference type="EC" id="2.3.1.117"/>
    </reaction>
</comment>
<comment type="pathway">
    <text evidence="1">Amino-acid biosynthesis; L-lysine biosynthesis via DAP pathway; LL-2,6-diaminopimelate from (S)-tetrahydrodipicolinate (succinylase route): step 1/3.</text>
</comment>
<comment type="subcellular location">
    <subcellularLocation>
        <location evidence="1">Cytoplasm</location>
    </subcellularLocation>
</comment>
<comment type="similarity">
    <text evidence="1">Belongs to the transferase hexapeptide repeat family.</text>
</comment>
<dbReference type="EC" id="2.3.1.117" evidence="1"/>
<dbReference type="EMBL" id="CU468230">
    <property type="protein sequence ID" value="CAP00293.1"/>
    <property type="molecule type" value="Genomic_DNA"/>
</dbReference>
<dbReference type="SMR" id="B0VTA6"/>
<dbReference type="KEGG" id="abm:ABSDF0933"/>
<dbReference type="HOGENOM" id="CLU_050859_0_1_6"/>
<dbReference type="UniPathway" id="UPA00034">
    <property type="reaction ID" value="UER00019"/>
</dbReference>
<dbReference type="Proteomes" id="UP000001741">
    <property type="component" value="Chromosome"/>
</dbReference>
<dbReference type="GO" id="GO:0005737">
    <property type="term" value="C:cytoplasm"/>
    <property type="evidence" value="ECO:0007669"/>
    <property type="project" value="UniProtKB-SubCell"/>
</dbReference>
<dbReference type="GO" id="GO:0008666">
    <property type="term" value="F:2,3,4,5-tetrahydropyridine-2,6-dicarboxylate N-succinyltransferase activity"/>
    <property type="evidence" value="ECO:0007669"/>
    <property type="project" value="UniProtKB-UniRule"/>
</dbReference>
<dbReference type="GO" id="GO:0016779">
    <property type="term" value="F:nucleotidyltransferase activity"/>
    <property type="evidence" value="ECO:0007669"/>
    <property type="project" value="TreeGrafter"/>
</dbReference>
<dbReference type="GO" id="GO:0019877">
    <property type="term" value="P:diaminopimelate biosynthetic process"/>
    <property type="evidence" value="ECO:0007669"/>
    <property type="project" value="UniProtKB-UniRule"/>
</dbReference>
<dbReference type="GO" id="GO:0009089">
    <property type="term" value="P:lysine biosynthetic process via diaminopimelate"/>
    <property type="evidence" value="ECO:0007669"/>
    <property type="project" value="UniProtKB-UniRule"/>
</dbReference>
<dbReference type="CDD" id="cd03350">
    <property type="entry name" value="LbH_THP_succinylT"/>
    <property type="match status" value="1"/>
</dbReference>
<dbReference type="Gene3D" id="2.160.10.10">
    <property type="entry name" value="Hexapeptide repeat proteins"/>
    <property type="match status" value="1"/>
</dbReference>
<dbReference type="Gene3D" id="1.10.166.10">
    <property type="entry name" value="Tetrahydrodipicolinate-N-succinyltransferase, N-terminal domain"/>
    <property type="match status" value="1"/>
</dbReference>
<dbReference type="HAMAP" id="MF_00811">
    <property type="entry name" value="DapD"/>
    <property type="match status" value="1"/>
</dbReference>
<dbReference type="InterPro" id="IPR005664">
    <property type="entry name" value="DapD_Trfase_Hexpep_rpt_fam"/>
</dbReference>
<dbReference type="InterPro" id="IPR001451">
    <property type="entry name" value="Hexapep"/>
</dbReference>
<dbReference type="InterPro" id="IPR018357">
    <property type="entry name" value="Hexapep_transf_CS"/>
</dbReference>
<dbReference type="InterPro" id="IPR023180">
    <property type="entry name" value="THP_succinylTrfase_dom1"/>
</dbReference>
<dbReference type="InterPro" id="IPR037133">
    <property type="entry name" value="THP_succinylTrfase_N_sf"/>
</dbReference>
<dbReference type="InterPro" id="IPR011004">
    <property type="entry name" value="Trimer_LpxA-like_sf"/>
</dbReference>
<dbReference type="NCBIfam" id="TIGR00965">
    <property type="entry name" value="dapD"/>
    <property type="match status" value="1"/>
</dbReference>
<dbReference type="NCBIfam" id="NF008808">
    <property type="entry name" value="PRK11830.1"/>
    <property type="match status" value="1"/>
</dbReference>
<dbReference type="PANTHER" id="PTHR19136:SF52">
    <property type="entry name" value="2,3,4,5-TETRAHYDROPYRIDINE-2,6-DICARBOXYLATE N-SUCCINYLTRANSFERASE"/>
    <property type="match status" value="1"/>
</dbReference>
<dbReference type="PANTHER" id="PTHR19136">
    <property type="entry name" value="MOLYBDENUM COFACTOR GUANYLYLTRANSFERASE"/>
    <property type="match status" value="1"/>
</dbReference>
<dbReference type="Pfam" id="PF14602">
    <property type="entry name" value="Hexapep_2"/>
    <property type="match status" value="1"/>
</dbReference>
<dbReference type="Pfam" id="PF14805">
    <property type="entry name" value="THDPS_N_2"/>
    <property type="match status" value="1"/>
</dbReference>
<dbReference type="SUPFAM" id="SSF51161">
    <property type="entry name" value="Trimeric LpxA-like enzymes"/>
    <property type="match status" value="1"/>
</dbReference>
<dbReference type="PROSITE" id="PS00101">
    <property type="entry name" value="HEXAPEP_TRANSFERASES"/>
    <property type="match status" value="1"/>
</dbReference>
<feature type="chain" id="PRO_1000134025" description="2,3,4,5-tetrahydropyridine-2,6-dicarboxylate N-succinyltransferase">
    <location>
        <begin position="1"/>
        <end position="273"/>
    </location>
</feature>
<sequence length="273" mass="29499">MSQLSTIIEQAFEDCANFTAADCPSEIRQAVEEAIAGLDNGTLRVAEKINGEWVVHQWLKKAVLLSFKLNDNKPIESCDLRFYDKVETKFSGWTEEQFKAAGVRVVPPAVARRGSFQAKNVVLMPSYVNIGAYVDEGTMVDTWATVGSCAQIGKNVHLSGGVGIGGVLEPLQANPTIIEDNCFIGARSEIVEGVIVEEGSVISMGVYIGQSTRIYDRETGEIHYGRVPAGSVVVPGNLPSADGKYSLYAAIIVKKVDAQTRAKTSLNDLLRAD</sequence>